<evidence type="ECO:0000255" key="1">
    <source>
        <dbReference type="HAMAP-Rule" id="MF_00160"/>
    </source>
</evidence>
<gene>
    <name evidence="1" type="primary">serC</name>
    <name type="ordered locus">YpAngola_A1952</name>
</gene>
<reference key="1">
    <citation type="journal article" date="2010" name="J. Bacteriol.">
        <title>Genome sequence of the deep-rooted Yersinia pestis strain Angola reveals new insights into the evolution and pangenome of the plague bacterium.</title>
        <authorList>
            <person name="Eppinger M."/>
            <person name="Worsham P.L."/>
            <person name="Nikolich M.P."/>
            <person name="Riley D.R."/>
            <person name="Sebastian Y."/>
            <person name="Mou S."/>
            <person name="Achtman M."/>
            <person name="Lindler L.E."/>
            <person name="Ravel J."/>
        </authorList>
    </citation>
    <scope>NUCLEOTIDE SEQUENCE [LARGE SCALE GENOMIC DNA]</scope>
    <source>
        <strain>Angola</strain>
    </source>
</reference>
<dbReference type="EC" id="2.6.1.52" evidence="1"/>
<dbReference type="EMBL" id="CP000901">
    <property type="protein sequence ID" value="ABX85520.1"/>
    <property type="molecule type" value="Genomic_DNA"/>
</dbReference>
<dbReference type="RefSeq" id="WP_002211326.1">
    <property type="nucleotide sequence ID" value="NZ_CP009935.1"/>
</dbReference>
<dbReference type="SMR" id="A9R7I1"/>
<dbReference type="GeneID" id="57977185"/>
<dbReference type="KEGG" id="ypg:YpAngola_A1952"/>
<dbReference type="PATRIC" id="fig|349746.12.peg.2928"/>
<dbReference type="UniPathway" id="UPA00135">
    <property type="reaction ID" value="UER00197"/>
</dbReference>
<dbReference type="UniPathway" id="UPA00244">
    <property type="reaction ID" value="UER00311"/>
</dbReference>
<dbReference type="GO" id="GO:0005737">
    <property type="term" value="C:cytoplasm"/>
    <property type="evidence" value="ECO:0007669"/>
    <property type="project" value="UniProtKB-SubCell"/>
</dbReference>
<dbReference type="GO" id="GO:0004648">
    <property type="term" value="F:O-phospho-L-serine:2-oxoglutarate aminotransferase activity"/>
    <property type="evidence" value="ECO:0007669"/>
    <property type="project" value="UniProtKB-UniRule"/>
</dbReference>
<dbReference type="GO" id="GO:0030170">
    <property type="term" value="F:pyridoxal phosphate binding"/>
    <property type="evidence" value="ECO:0007669"/>
    <property type="project" value="UniProtKB-UniRule"/>
</dbReference>
<dbReference type="GO" id="GO:0006564">
    <property type="term" value="P:L-serine biosynthetic process"/>
    <property type="evidence" value="ECO:0007669"/>
    <property type="project" value="UniProtKB-UniRule"/>
</dbReference>
<dbReference type="GO" id="GO:0008615">
    <property type="term" value="P:pyridoxine biosynthetic process"/>
    <property type="evidence" value="ECO:0007669"/>
    <property type="project" value="UniProtKB-UniRule"/>
</dbReference>
<dbReference type="CDD" id="cd00611">
    <property type="entry name" value="PSAT_like"/>
    <property type="match status" value="1"/>
</dbReference>
<dbReference type="FunFam" id="3.40.640.10:FF:000010">
    <property type="entry name" value="Phosphoserine aminotransferase"/>
    <property type="match status" value="1"/>
</dbReference>
<dbReference type="FunFam" id="3.90.1150.10:FF:000006">
    <property type="entry name" value="Phosphoserine aminotransferase"/>
    <property type="match status" value="1"/>
</dbReference>
<dbReference type="Gene3D" id="3.90.1150.10">
    <property type="entry name" value="Aspartate Aminotransferase, domain 1"/>
    <property type="match status" value="1"/>
</dbReference>
<dbReference type="Gene3D" id="3.40.640.10">
    <property type="entry name" value="Type I PLP-dependent aspartate aminotransferase-like (Major domain)"/>
    <property type="match status" value="1"/>
</dbReference>
<dbReference type="HAMAP" id="MF_00160">
    <property type="entry name" value="SerC_aminotrans_5"/>
    <property type="match status" value="1"/>
</dbReference>
<dbReference type="InterPro" id="IPR000192">
    <property type="entry name" value="Aminotrans_V_dom"/>
</dbReference>
<dbReference type="InterPro" id="IPR020578">
    <property type="entry name" value="Aminotrans_V_PyrdxlP_BS"/>
</dbReference>
<dbReference type="InterPro" id="IPR022278">
    <property type="entry name" value="Pser_aminoTfrase"/>
</dbReference>
<dbReference type="InterPro" id="IPR015424">
    <property type="entry name" value="PyrdxlP-dep_Trfase"/>
</dbReference>
<dbReference type="InterPro" id="IPR015421">
    <property type="entry name" value="PyrdxlP-dep_Trfase_major"/>
</dbReference>
<dbReference type="InterPro" id="IPR015422">
    <property type="entry name" value="PyrdxlP-dep_Trfase_small"/>
</dbReference>
<dbReference type="NCBIfam" id="NF003764">
    <property type="entry name" value="PRK05355.1"/>
    <property type="match status" value="1"/>
</dbReference>
<dbReference type="NCBIfam" id="TIGR01364">
    <property type="entry name" value="serC_1"/>
    <property type="match status" value="1"/>
</dbReference>
<dbReference type="PANTHER" id="PTHR43247">
    <property type="entry name" value="PHOSPHOSERINE AMINOTRANSFERASE"/>
    <property type="match status" value="1"/>
</dbReference>
<dbReference type="PANTHER" id="PTHR43247:SF1">
    <property type="entry name" value="PHOSPHOSERINE AMINOTRANSFERASE"/>
    <property type="match status" value="1"/>
</dbReference>
<dbReference type="Pfam" id="PF00266">
    <property type="entry name" value="Aminotran_5"/>
    <property type="match status" value="1"/>
</dbReference>
<dbReference type="PIRSF" id="PIRSF000525">
    <property type="entry name" value="SerC"/>
    <property type="match status" value="1"/>
</dbReference>
<dbReference type="SUPFAM" id="SSF53383">
    <property type="entry name" value="PLP-dependent transferases"/>
    <property type="match status" value="1"/>
</dbReference>
<dbReference type="PROSITE" id="PS00595">
    <property type="entry name" value="AA_TRANSFER_CLASS_5"/>
    <property type="match status" value="1"/>
</dbReference>
<protein>
    <recommendedName>
        <fullName evidence="1">Phosphoserine aminotransferase</fullName>
        <ecNumber evidence="1">2.6.1.52</ecNumber>
    </recommendedName>
    <alternativeName>
        <fullName evidence="1">Phosphohydroxythreonine aminotransferase</fullName>
        <shortName evidence="1">PSAT</shortName>
    </alternativeName>
</protein>
<keyword id="KW-0028">Amino-acid biosynthesis</keyword>
<keyword id="KW-0032">Aminotransferase</keyword>
<keyword id="KW-0963">Cytoplasm</keyword>
<keyword id="KW-0663">Pyridoxal phosphate</keyword>
<keyword id="KW-0664">Pyridoxine biosynthesis</keyword>
<keyword id="KW-0718">Serine biosynthesis</keyword>
<keyword id="KW-0808">Transferase</keyword>
<organism>
    <name type="scientific">Yersinia pestis bv. Antiqua (strain Angola)</name>
    <dbReference type="NCBI Taxonomy" id="349746"/>
    <lineage>
        <taxon>Bacteria</taxon>
        <taxon>Pseudomonadati</taxon>
        <taxon>Pseudomonadota</taxon>
        <taxon>Gammaproteobacteria</taxon>
        <taxon>Enterobacterales</taxon>
        <taxon>Yersiniaceae</taxon>
        <taxon>Yersinia</taxon>
    </lineage>
</organism>
<feature type="chain" id="PRO_1000203588" description="Phosphoserine aminotransferase">
    <location>
        <begin position="1"/>
        <end position="361"/>
    </location>
</feature>
<feature type="binding site" evidence="1">
    <location>
        <position position="42"/>
    </location>
    <ligand>
        <name>L-glutamate</name>
        <dbReference type="ChEBI" id="CHEBI:29985"/>
    </ligand>
</feature>
<feature type="binding site" evidence="1">
    <location>
        <begin position="76"/>
        <end position="77"/>
    </location>
    <ligand>
        <name>pyridoxal 5'-phosphate</name>
        <dbReference type="ChEBI" id="CHEBI:597326"/>
    </ligand>
</feature>
<feature type="binding site" evidence="1">
    <location>
        <position position="102"/>
    </location>
    <ligand>
        <name>pyridoxal 5'-phosphate</name>
        <dbReference type="ChEBI" id="CHEBI:597326"/>
    </ligand>
</feature>
<feature type="binding site" evidence="1">
    <location>
        <position position="153"/>
    </location>
    <ligand>
        <name>pyridoxal 5'-phosphate</name>
        <dbReference type="ChEBI" id="CHEBI:597326"/>
    </ligand>
</feature>
<feature type="binding site" evidence="1">
    <location>
        <position position="173"/>
    </location>
    <ligand>
        <name>pyridoxal 5'-phosphate</name>
        <dbReference type="ChEBI" id="CHEBI:597326"/>
    </ligand>
</feature>
<feature type="binding site" evidence="1">
    <location>
        <position position="196"/>
    </location>
    <ligand>
        <name>pyridoxal 5'-phosphate</name>
        <dbReference type="ChEBI" id="CHEBI:597326"/>
    </ligand>
</feature>
<feature type="binding site" evidence="1">
    <location>
        <begin position="238"/>
        <end position="239"/>
    </location>
    <ligand>
        <name>pyridoxal 5'-phosphate</name>
        <dbReference type="ChEBI" id="CHEBI:597326"/>
    </ligand>
</feature>
<feature type="modified residue" description="N6-(pyridoxal phosphate)lysine" evidence="1">
    <location>
        <position position="197"/>
    </location>
</feature>
<comment type="function">
    <text evidence="1">Catalyzes the reversible conversion of 3-phosphohydroxypyruvate to phosphoserine and of 3-hydroxy-2-oxo-4-phosphonooxybutanoate to phosphohydroxythreonine.</text>
</comment>
<comment type="catalytic activity">
    <reaction evidence="1">
        <text>O-phospho-L-serine + 2-oxoglutarate = 3-phosphooxypyruvate + L-glutamate</text>
        <dbReference type="Rhea" id="RHEA:14329"/>
        <dbReference type="ChEBI" id="CHEBI:16810"/>
        <dbReference type="ChEBI" id="CHEBI:18110"/>
        <dbReference type="ChEBI" id="CHEBI:29985"/>
        <dbReference type="ChEBI" id="CHEBI:57524"/>
        <dbReference type="EC" id="2.6.1.52"/>
    </reaction>
</comment>
<comment type="catalytic activity">
    <reaction evidence="1">
        <text>4-(phosphooxy)-L-threonine + 2-oxoglutarate = (R)-3-hydroxy-2-oxo-4-phosphooxybutanoate + L-glutamate</text>
        <dbReference type="Rhea" id="RHEA:16573"/>
        <dbReference type="ChEBI" id="CHEBI:16810"/>
        <dbReference type="ChEBI" id="CHEBI:29985"/>
        <dbReference type="ChEBI" id="CHEBI:58452"/>
        <dbReference type="ChEBI" id="CHEBI:58538"/>
        <dbReference type="EC" id="2.6.1.52"/>
    </reaction>
</comment>
<comment type="cofactor">
    <cofactor evidence="1">
        <name>pyridoxal 5'-phosphate</name>
        <dbReference type="ChEBI" id="CHEBI:597326"/>
    </cofactor>
    <text evidence="1">Binds 1 pyridoxal phosphate per subunit.</text>
</comment>
<comment type="pathway">
    <text evidence="1">Amino-acid biosynthesis; L-serine biosynthesis; L-serine from 3-phospho-D-glycerate: step 2/3.</text>
</comment>
<comment type="pathway">
    <text evidence="1">Cofactor biosynthesis; pyridoxine 5'-phosphate biosynthesis; pyridoxine 5'-phosphate from D-erythrose 4-phosphate: step 3/5.</text>
</comment>
<comment type="subunit">
    <text evidence="1">Homodimer.</text>
</comment>
<comment type="subcellular location">
    <subcellularLocation>
        <location evidence="1">Cytoplasm</location>
    </subcellularLocation>
</comment>
<comment type="similarity">
    <text evidence="1">Belongs to the class-V pyridoxal-phosphate-dependent aminotransferase family. SerC subfamily.</text>
</comment>
<proteinExistence type="inferred from homology"/>
<name>SERC_YERPG</name>
<accession>A9R7I1</accession>
<sequence length="361" mass="40084">MTQVYNFSAGPAMLPVEVLRRAEQELRNWHGLGTSVMEISHRSKEFMQVAEESEKDLRDLLQIPANYKVLFCHGGARAQFAAVPLNLLGDRNSADYIDGGYWAHSAIKEAQKYCTPNVIDVTTHDNGLTGIQPMKQWKLSDNAAYVHYCPNETIDGVAINEQPDFGNKVVVADYSSSILSRPIDISRYGVIYAGAQKNIGPAGLTLVIVREDLLGKAHTALPSILDYKVLADNDSMFNTPPTFAWYLSGLVFKWLKEQGGLGEMEKRNQAKAELLYGAIDRTGFYRNQVAITNRSWMNVPFQMADASLDKLFLSEAEAQGLQALKGHRVAGGMRASIYNAMPIEGVKALTDFMADFERRHG</sequence>